<reference key="1">
    <citation type="submission" date="2008-10" db="EMBL/GenBank/DDBJ databases">
        <title>Complete sequence of Desulfovibrio vulgaris str. 'Miyazaki F'.</title>
        <authorList>
            <person name="Lucas S."/>
            <person name="Copeland A."/>
            <person name="Lapidus A."/>
            <person name="Glavina del Rio T."/>
            <person name="Dalin E."/>
            <person name="Tice H."/>
            <person name="Bruce D."/>
            <person name="Goodwin L."/>
            <person name="Pitluck S."/>
            <person name="Sims D."/>
            <person name="Brettin T."/>
            <person name="Detter J.C."/>
            <person name="Han C."/>
            <person name="Larimer F."/>
            <person name="Land M."/>
            <person name="Hauser L."/>
            <person name="Kyrpides N."/>
            <person name="Mikhailova N."/>
            <person name="Hazen T.C."/>
            <person name="Richardson P."/>
        </authorList>
    </citation>
    <scope>NUCLEOTIDE SEQUENCE [LARGE SCALE GENOMIC DNA]</scope>
    <source>
        <strain>DSM 19637 / Miyazaki F</strain>
    </source>
</reference>
<dbReference type="EMBL" id="CP001197">
    <property type="protein sequence ID" value="ACL07040.1"/>
    <property type="molecule type" value="Genomic_DNA"/>
</dbReference>
<dbReference type="SMR" id="B8DN96"/>
<dbReference type="STRING" id="883.DvMF_0079"/>
<dbReference type="KEGG" id="dvm:DvMF_0079"/>
<dbReference type="eggNOG" id="COG0087">
    <property type="taxonomic scope" value="Bacteria"/>
</dbReference>
<dbReference type="HOGENOM" id="CLU_044142_4_1_7"/>
<dbReference type="OrthoDB" id="9806135at2"/>
<dbReference type="GO" id="GO:0022625">
    <property type="term" value="C:cytosolic large ribosomal subunit"/>
    <property type="evidence" value="ECO:0007669"/>
    <property type="project" value="TreeGrafter"/>
</dbReference>
<dbReference type="GO" id="GO:0019843">
    <property type="term" value="F:rRNA binding"/>
    <property type="evidence" value="ECO:0007669"/>
    <property type="project" value="UniProtKB-UniRule"/>
</dbReference>
<dbReference type="GO" id="GO:0003735">
    <property type="term" value="F:structural constituent of ribosome"/>
    <property type="evidence" value="ECO:0007669"/>
    <property type="project" value="InterPro"/>
</dbReference>
<dbReference type="GO" id="GO:0006412">
    <property type="term" value="P:translation"/>
    <property type="evidence" value="ECO:0007669"/>
    <property type="project" value="UniProtKB-UniRule"/>
</dbReference>
<dbReference type="FunFam" id="2.40.30.10:FF:000004">
    <property type="entry name" value="50S ribosomal protein L3"/>
    <property type="match status" value="1"/>
</dbReference>
<dbReference type="FunFam" id="3.30.160.810:FF:000001">
    <property type="entry name" value="50S ribosomal protein L3"/>
    <property type="match status" value="1"/>
</dbReference>
<dbReference type="Gene3D" id="3.30.160.810">
    <property type="match status" value="1"/>
</dbReference>
<dbReference type="Gene3D" id="2.40.30.10">
    <property type="entry name" value="Translation factors"/>
    <property type="match status" value="1"/>
</dbReference>
<dbReference type="HAMAP" id="MF_01325_B">
    <property type="entry name" value="Ribosomal_uL3_B"/>
    <property type="match status" value="1"/>
</dbReference>
<dbReference type="InterPro" id="IPR000597">
    <property type="entry name" value="Ribosomal_uL3"/>
</dbReference>
<dbReference type="InterPro" id="IPR019927">
    <property type="entry name" value="Ribosomal_uL3_bac/org-type"/>
</dbReference>
<dbReference type="InterPro" id="IPR009000">
    <property type="entry name" value="Transl_B-barrel_sf"/>
</dbReference>
<dbReference type="NCBIfam" id="TIGR03625">
    <property type="entry name" value="L3_bact"/>
    <property type="match status" value="1"/>
</dbReference>
<dbReference type="PANTHER" id="PTHR11229">
    <property type="entry name" value="50S RIBOSOMAL PROTEIN L3"/>
    <property type="match status" value="1"/>
</dbReference>
<dbReference type="PANTHER" id="PTHR11229:SF16">
    <property type="entry name" value="LARGE RIBOSOMAL SUBUNIT PROTEIN UL3C"/>
    <property type="match status" value="1"/>
</dbReference>
<dbReference type="Pfam" id="PF00297">
    <property type="entry name" value="Ribosomal_L3"/>
    <property type="match status" value="1"/>
</dbReference>
<dbReference type="SUPFAM" id="SSF50447">
    <property type="entry name" value="Translation proteins"/>
    <property type="match status" value="1"/>
</dbReference>
<sequence length="209" mass="22503">MAEKLGILGRKVGMTRIFASDGSAVAVTVIQAGPCPVIQVRNGETDGYDAVQIAFEEAKEKHVTKPARGHFAKAGKGLFRNLREIRLEAPAEFEVGQELTVSLFAAGEKVKVTGTSIGKGYQGVMRRWNFAGSKDTHGCEKVHRSGGSIGNNTFPGHVFKGKKMAGHWGDERVTVKNLEIVDIRAEDNVILVKGAVPGPKNGLVLVRKQ</sequence>
<feature type="chain" id="PRO_1000141857" description="Large ribosomal subunit protein uL3">
    <location>
        <begin position="1"/>
        <end position="209"/>
    </location>
</feature>
<accession>B8DN96</accession>
<name>RL3_NITV9</name>
<protein>
    <recommendedName>
        <fullName evidence="1">Large ribosomal subunit protein uL3</fullName>
    </recommendedName>
    <alternativeName>
        <fullName evidence="2">50S ribosomal protein L3</fullName>
    </alternativeName>
</protein>
<proteinExistence type="inferred from homology"/>
<evidence type="ECO:0000255" key="1">
    <source>
        <dbReference type="HAMAP-Rule" id="MF_01325"/>
    </source>
</evidence>
<evidence type="ECO:0000305" key="2"/>
<comment type="function">
    <text evidence="1">One of the primary rRNA binding proteins, it binds directly near the 3'-end of the 23S rRNA, where it nucleates assembly of the 50S subunit.</text>
</comment>
<comment type="subunit">
    <text evidence="1">Part of the 50S ribosomal subunit. Forms a cluster with proteins L14 and L19.</text>
</comment>
<comment type="similarity">
    <text evidence="1">Belongs to the universal ribosomal protein uL3 family.</text>
</comment>
<keyword id="KW-0687">Ribonucleoprotein</keyword>
<keyword id="KW-0689">Ribosomal protein</keyword>
<keyword id="KW-0694">RNA-binding</keyword>
<keyword id="KW-0699">rRNA-binding</keyword>
<organism>
    <name type="scientific">Nitratidesulfovibrio vulgaris (strain DSM 19637 / Miyazaki F)</name>
    <name type="common">Desulfovibrio vulgaris</name>
    <dbReference type="NCBI Taxonomy" id="883"/>
    <lineage>
        <taxon>Bacteria</taxon>
        <taxon>Pseudomonadati</taxon>
        <taxon>Thermodesulfobacteriota</taxon>
        <taxon>Desulfovibrionia</taxon>
        <taxon>Desulfovibrionales</taxon>
        <taxon>Desulfovibrionaceae</taxon>
        <taxon>Nitratidesulfovibrio</taxon>
    </lineage>
</organism>
<gene>
    <name evidence="1" type="primary">rplC</name>
    <name type="ordered locus">DvMF_0079</name>
</gene>